<organism>
    <name type="scientific">Homo sapiens</name>
    <name type="common">Human</name>
    <dbReference type="NCBI Taxonomy" id="9606"/>
    <lineage>
        <taxon>Eukaryota</taxon>
        <taxon>Metazoa</taxon>
        <taxon>Chordata</taxon>
        <taxon>Craniata</taxon>
        <taxon>Vertebrata</taxon>
        <taxon>Euteleostomi</taxon>
        <taxon>Mammalia</taxon>
        <taxon>Eutheria</taxon>
        <taxon>Euarchontoglires</taxon>
        <taxon>Primates</taxon>
        <taxon>Haplorrhini</taxon>
        <taxon>Catarrhini</taxon>
        <taxon>Hominidae</taxon>
        <taxon>Homo</taxon>
    </lineage>
</organism>
<protein>
    <recommendedName>
        <fullName evidence="2">Armadillo-like helical domain containing protein 1</fullName>
    </recommendedName>
    <alternativeName>
        <fullName>p40</fullName>
    </alternativeName>
</protein>
<sequence length="440" mass="48855">MTSIKEQAAISRLLSFLQEWDNAGKVARSHILDKFIETNQGKTAPELEQEFSQGASLFLVRLTTSLRITYMTDSCLEKLLRSIGIFLSAVSSNRYLIEFLEVGGVLTLLEILGLEKIKEEAKKESVKLLQVIANSGRTYKELICESYGVRSIAEFLAKSKSEETQEEVQVLLDSLVHGNPKYQNQVYKGLIALLPCESPKAQQLSLQTLRTAQPIIGTTHPSIVDCVLKVLGTMHLEVQYEAIELIKDLVGYDVRQALLKGLVALLIPSVKEISKLQAKILSDPSVLQLTPSLPMFLQQAAAAKAIGVLARNDMSIAEELLYLRVVRGLMAAMGNTDHSNSQRLASLTLECFVQMFPLVAEHVRKCMGEELYQLFLSNAEDLYMKIDSIQADILAANTVNVTKALCLHGSSYSMNTLYGSRDSAQMAYLTHFEEDVESKE</sequence>
<accession>Q6PIY5</accession>
<accession>A1KXE5</accession>
<name>ARMD1_HUMAN</name>
<evidence type="ECO:0000303" key="1">
    <source>
    </source>
</evidence>
<evidence type="ECO:0000305" key="2"/>
<evidence type="ECO:0000312" key="3">
    <source>
        <dbReference type="HGNC" id="HGNC:34345"/>
    </source>
</evidence>
<feature type="chain" id="PRO_0000320611" description="Armadillo-like helical domain containing protein 1">
    <location>
        <begin position="1"/>
        <end position="440"/>
    </location>
</feature>
<feature type="splice variant" id="VSP_031683" description="In isoform 2." evidence="1">
    <location>
        <begin position="308"/>
        <end position="440"/>
    </location>
</feature>
<keyword id="KW-0025">Alternative splicing</keyword>
<keyword id="KW-1267">Proteomics identification</keyword>
<keyword id="KW-1185">Reference proteome</keyword>
<reference key="1">
    <citation type="submission" date="2005-09" db="EMBL/GenBank/DDBJ databases">
        <authorList>
            <person name="Mural R.J."/>
            <person name="Istrail S."/>
            <person name="Sutton G.G."/>
            <person name="Florea L."/>
            <person name="Halpern A.L."/>
            <person name="Mobarry C.M."/>
            <person name="Lippert R."/>
            <person name="Walenz B."/>
            <person name="Shatkay H."/>
            <person name="Dew I."/>
            <person name="Miller J.R."/>
            <person name="Flanigan M.J."/>
            <person name="Edwards N.J."/>
            <person name="Bolanos R."/>
            <person name="Fasulo D."/>
            <person name="Halldorsson B.V."/>
            <person name="Hannenhalli S."/>
            <person name="Turner R."/>
            <person name="Yooseph S."/>
            <person name="Lu F."/>
            <person name="Nusskern D.R."/>
            <person name="Shue B.C."/>
            <person name="Zheng X.H."/>
            <person name="Zhong F."/>
            <person name="Delcher A.L."/>
            <person name="Huson D.H."/>
            <person name="Kravitz S.A."/>
            <person name="Mouchard L."/>
            <person name="Reinert K."/>
            <person name="Remington K.A."/>
            <person name="Clark A.G."/>
            <person name="Waterman M.S."/>
            <person name="Eichler E.E."/>
            <person name="Adams M.D."/>
            <person name="Hunkapiller M.W."/>
            <person name="Myers E.W."/>
            <person name="Venter J.C."/>
        </authorList>
    </citation>
    <scope>NUCLEOTIDE SEQUENCE [LARGE SCALE GENOMIC DNA]</scope>
</reference>
<reference key="2">
    <citation type="journal article" date="2004" name="Genome Res.">
        <title>The status, quality, and expansion of the NIH full-length cDNA project: the Mammalian Gene Collection (MGC).</title>
        <authorList>
            <consortium name="The MGC Project Team"/>
        </authorList>
    </citation>
    <scope>NUCLEOTIDE SEQUENCE [LARGE SCALE MRNA] (ISOFORM 2)</scope>
    <source>
        <tissue>Testis</tissue>
    </source>
</reference>
<reference key="3">
    <citation type="submission" date="2003-03" db="EMBL/GenBank/DDBJ databases">
        <authorList>
            <person name="Heese K."/>
        </authorList>
    </citation>
    <scope>NUCLEOTIDE SEQUENCE [MRNA] OF 71-440 (ISOFORM 1)</scope>
</reference>
<gene>
    <name evidence="3" type="primary">ARMH1</name>
    <name type="synonym">C1orf228</name>
    <name type="synonym">NCRNA00082</name>
</gene>
<comment type="alternative products">
    <event type="alternative splicing"/>
    <isoform>
        <id>Q6PIY5-1</id>
        <name>1</name>
        <sequence type="displayed"/>
    </isoform>
    <isoform>
        <id>Q6PIY5-2</id>
        <name>2</name>
        <sequence type="described" ref="VSP_031683"/>
    </isoform>
</comment>
<proteinExistence type="evidence at protein level"/>
<dbReference type="EMBL" id="CH471059">
    <property type="protein sequence ID" value="EAX07027.1"/>
    <property type="molecule type" value="Genomic_DNA"/>
</dbReference>
<dbReference type="EMBL" id="BC026115">
    <property type="protein sequence ID" value="AAH26115.1"/>
    <property type="molecule type" value="mRNA"/>
</dbReference>
<dbReference type="EMBL" id="AY254217">
    <property type="protein sequence ID" value="AAP80384.1"/>
    <property type="molecule type" value="mRNA"/>
</dbReference>
<dbReference type="CCDS" id="CCDS53311.1">
    <molecule id="Q6PIY5-1"/>
</dbReference>
<dbReference type="RefSeq" id="NP_001139108.1">
    <molecule id="Q6PIY5-1"/>
    <property type="nucleotide sequence ID" value="NM_001145636.2"/>
</dbReference>
<dbReference type="BioGRID" id="130905">
    <property type="interactions" value="8"/>
</dbReference>
<dbReference type="FunCoup" id="Q6PIY5">
    <property type="interactions" value="119"/>
</dbReference>
<dbReference type="IntAct" id="Q6PIY5">
    <property type="interactions" value="5"/>
</dbReference>
<dbReference type="STRING" id="9606.ENSP00000420716"/>
<dbReference type="GlyGen" id="Q6PIY5">
    <property type="glycosylation" value="1 site, 1 O-linked glycan (1 site)"/>
</dbReference>
<dbReference type="iPTMnet" id="Q6PIY5"/>
<dbReference type="PhosphoSitePlus" id="Q6PIY5"/>
<dbReference type="BioMuta" id="C1orf228"/>
<dbReference type="DMDM" id="190359055"/>
<dbReference type="MassIVE" id="Q6PIY5"/>
<dbReference type="PaxDb" id="9606-ENSP00000420716"/>
<dbReference type="PeptideAtlas" id="Q6PIY5"/>
<dbReference type="ProteomicsDB" id="67185">
    <molecule id="Q6PIY5-1"/>
</dbReference>
<dbReference type="ProteomicsDB" id="67186">
    <molecule id="Q6PIY5-2"/>
</dbReference>
<dbReference type="Antibodypedia" id="50330">
    <property type="antibodies" value="27 antibodies from 11 providers"/>
</dbReference>
<dbReference type="DNASU" id="339541"/>
<dbReference type="Ensembl" id="ENST00000458657.6">
    <molecule id="Q6PIY5-1"/>
    <property type="protein sequence ID" value="ENSP00000420716.1"/>
    <property type="gene ID" value="ENSG00000198520.12"/>
</dbReference>
<dbReference type="Ensembl" id="ENST00000535358.6">
    <molecule id="Q6PIY5-1"/>
    <property type="protein sequence ID" value="ENSP00000440524.1"/>
    <property type="gene ID" value="ENSG00000198520.12"/>
</dbReference>
<dbReference type="GeneID" id="339541"/>
<dbReference type="KEGG" id="hsa:339541"/>
<dbReference type="MANE-Select" id="ENST00000535358.6">
    <property type="protein sequence ID" value="ENSP00000440524.1"/>
    <property type="RefSeq nucleotide sequence ID" value="NM_001145636.2"/>
    <property type="RefSeq protein sequence ID" value="NP_001139108.1"/>
</dbReference>
<dbReference type="UCSC" id="uc001cmf.2">
    <molecule id="Q6PIY5-1"/>
    <property type="organism name" value="human"/>
</dbReference>
<dbReference type="AGR" id="HGNC:34345"/>
<dbReference type="CTD" id="339541"/>
<dbReference type="DisGeNET" id="339541"/>
<dbReference type="GeneCards" id="ARMH1"/>
<dbReference type="HGNC" id="HGNC:34345">
    <property type="gene designation" value="ARMH1"/>
</dbReference>
<dbReference type="HPA" id="ENSG00000198520">
    <property type="expression patterns" value="Tissue enhanced (fallopian tube, testis)"/>
</dbReference>
<dbReference type="neXtProt" id="NX_Q6PIY5"/>
<dbReference type="OpenTargets" id="ENSG00000198520"/>
<dbReference type="PharmGKB" id="PA164717053"/>
<dbReference type="VEuPathDB" id="HostDB:ENSG00000198520"/>
<dbReference type="eggNOG" id="ENOG502QQAX">
    <property type="taxonomic scope" value="Eukaryota"/>
</dbReference>
<dbReference type="GeneTree" id="ENSGT00390000001593"/>
<dbReference type="HOGENOM" id="CLU_057628_1_0_1"/>
<dbReference type="InParanoid" id="Q6PIY5"/>
<dbReference type="OMA" id="ETICECY"/>
<dbReference type="OrthoDB" id="278163at2759"/>
<dbReference type="PAN-GO" id="Q6PIY5">
    <property type="GO annotations" value="0 GO annotations based on evolutionary models"/>
</dbReference>
<dbReference type="PhylomeDB" id="Q6PIY5"/>
<dbReference type="TreeFam" id="TF329061"/>
<dbReference type="PathwayCommons" id="Q6PIY5"/>
<dbReference type="SignaLink" id="Q6PIY5"/>
<dbReference type="BioGRID-ORCS" id="339541">
    <property type="hits" value="25 hits in 1132 CRISPR screens"/>
</dbReference>
<dbReference type="GenomeRNAi" id="339541"/>
<dbReference type="Pharos" id="Q6PIY5">
    <property type="development level" value="Tdark"/>
</dbReference>
<dbReference type="PRO" id="PR:Q6PIY5"/>
<dbReference type="Proteomes" id="UP000005640">
    <property type="component" value="Chromosome 1"/>
</dbReference>
<dbReference type="RNAct" id="Q6PIY5">
    <property type="molecule type" value="protein"/>
</dbReference>
<dbReference type="Bgee" id="ENSG00000198520">
    <property type="expression patterns" value="Expressed in right uterine tube and 101 other cell types or tissues"/>
</dbReference>
<dbReference type="ExpressionAtlas" id="Q6PIY5">
    <property type="expression patterns" value="baseline and differential"/>
</dbReference>
<dbReference type="GO" id="GO:0005829">
    <property type="term" value="C:cytosol"/>
    <property type="evidence" value="ECO:0000314"/>
    <property type="project" value="HPA"/>
</dbReference>
<dbReference type="GO" id="GO:0005886">
    <property type="term" value="C:plasma membrane"/>
    <property type="evidence" value="ECO:0000314"/>
    <property type="project" value="HPA"/>
</dbReference>
<dbReference type="Gene3D" id="1.25.10.10">
    <property type="entry name" value="Leucine-rich Repeat Variant"/>
    <property type="match status" value="1"/>
</dbReference>
<dbReference type="InterPro" id="IPR011989">
    <property type="entry name" value="ARM-like"/>
</dbReference>
<dbReference type="InterPro" id="IPR016024">
    <property type="entry name" value="ARM-type_fold"/>
</dbReference>
<dbReference type="InterPro" id="IPR041090">
    <property type="entry name" value="DUF5578"/>
</dbReference>
<dbReference type="PANTHER" id="PTHR34258">
    <property type="entry name" value="ARMADILLO-LIKE HELICAL DOMAIN CONTAINING PROTEIN 1"/>
    <property type="match status" value="1"/>
</dbReference>
<dbReference type="PANTHER" id="PTHR34258:SF1">
    <property type="entry name" value="ARMADILLO-LIKE HELICAL DOMAIN CONTAINING PROTEIN 1"/>
    <property type="match status" value="1"/>
</dbReference>
<dbReference type="Pfam" id="PF17741">
    <property type="entry name" value="DUF5578"/>
    <property type="match status" value="1"/>
</dbReference>
<dbReference type="SUPFAM" id="SSF48371">
    <property type="entry name" value="ARM repeat"/>
    <property type="match status" value="1"/>
</dbReference>